<accession>Q6LXI4</accession>
<sequence length="147" mass="16156">MAGSKSPKGEFAGRKLLLKRKASRWHHYKYVNKALSLKLKADPLEGAPMGRGIVIEKVGLEAKQPNSAIRKCVRVQLIKNGRQVTAFAPGNHAINFIDEHDEVVIEGIGGPSGQAKGDIPGVRYKVVLVGKNSIRELVRGRQEKVKR</sequence>
<feature type="chain" id="PRO_0000146372" description="Small ribosomal subunit protein uS12">
    <location>
        <begin position="1"/>
        <end position="147"/>
    </location>
</feature>
<keyword id="KW-1185">Reference proteome</keyword>
<keyword id="KW-0687">Ribonucleoprotein</keyword>
<keyword id="KW-0689">Ribosomal protein</keyword>
<keyword id="KW-0694">RNA-binding</keyword>
<keyword id="KW-0699">rRNA-binding</keyword>
<evidence type="ECO:0000255" key="1">
    <source>
        <dbReference type="HAMAP-Rule" id="MF_00403"/>
    </source>
</evidence>
<evidence type="ECO:0000305" key="2"/>
<name>RS12_METMP</name>
<dbReference type="EMBL" id="BX950229">
    <property type="protein sequence ID" value="CAF30923.1"/>
    <property type="molecule type" value="Genomic_DNA"/>
</dbReference>
<dbReference type="RefSeq" id="WP_011171311.1">
    <property type="nucleotide sequence ID" value="NC_005791.1"/>
</dbReference>
<dbReference type="SMR" id="Q6LXI4"/>
<dbReference type="STRING" id="267377.MMP1367"/>
<dbReference type="EnsemblBacteria" id="CAF30923">
    <property type="protein sequence ID" value="CAF30923"/>
    <property type="gene ID" value="MMP1367"/>
</dbReference>
<dbReference type="KEGG" id="mmp:MMP1367"/>
<dbReference type="PATRIC" id="fig|267377.15.peg.1402"/>
<dbReference type="eggNOG" id="arCOG04255">
    <property type="taxonomic scope" value="Archaea"/>
</dbReference>
<dbReference type="HOGENOM" id="CLU_115574_0_1_2"/>
<dbReference type="OrthoDB" id="45154at2157"/>
<dbReference type="Proteomes" id="UP000000590">
    <property type="component" value="Chromosome"/>
</dbReference>
<dbReference type="GO" id="GO:0015935">
    <property type="term" value="C:small ribosomal subunit"/>
    <property type="evidence" value="ECO:0007669"/>
    <property type="project" value="InterPro"/>
</dbReference>
<dbReference type="GO" id="GO:0019843">
    <property type="term" value="F:rRNA binding"/>
    <property type="evidence" value="ECO:0007669"/>
    <property type="project" value="UniProtKB-UniRule"/>
</dbReference>
<dbReference type="GO" id="GO:0003735">
    <property type="term" value="F:structural constituent of ribosome"/>
    <property type="evidence" value="ECO:0007669"/>
    <property type="project" value="InterPro"/>
</dbReference>
<dbReference type="GO" id="GO:0006412">
    <property type="term" value="P:translation"/>
    <property type="evidence" value="ECO:0007669"/>
    <property type="project" value="UniProtKB-UniRule"/>
</dbReference>
<dbReference type="CDD" id="cd03367">
    <property type="entry name" value="Ribosomal_S23"/>
    <property type="match status" value="1"/>
</dbReference>
<dbReference type="FunFam" id="2.40.50.140:FF:000007">
    <property type="entry name" value="40S ribosomal protein S23"/>
    <property type="match status" value="1"/>
</dbReference>
<dbReference type="Gene3D" id="2.40.50.140">
    <property type="entry name" value="Nucleic acid-binding proteins"/>
    <property type="match status" value="1"/>
</dbReference>
<dbReference type="HAMAP" id="MF_00403_A">
    <property type="entry name" value="Ribosomal_uS12_A"/>
    <property type="match status" value="1"/>
</dbReference>
<dbReference type="InterPro" id="IPR012340">
    <property type="entry name" value="NA-bd_OB-fold"/>
</dbReference>
<dbReference type="InterPro" id="IPR006032">
    <property type="entry name" value="Ribosomal_uS12"/>
</dbReference>
<dbReference type="InterPro" id="IPR022863">
    <property type="entry name" value="Ribosomal_uS12_arc"/>
</dbReference>
<dbReference type="InterPro" id="IPR005680">
    <property type="entry name" value="Ribosomal_uS12_euk/arc"/>
</dbReference>
<dbReference type="NCBIfam" id="NF003254">
    <property type="entry name" value="PRK04211.1"/>
    <property type="match status" value="1"/>
</dbReference>
<dbReference type="NCBIfam" id="TIGR00982">
    <property type="entry name" value="uS12_E_A"/>
    <property type="match status" value="1"/>
</dbReference>
<dbReference type="PANTHER" id="PTHR11652">
    <property type="entry name" value="30S RIBOSOMAL PROTEIN S12 FAMILY MEMBER"/>
    <property type="match status" value="1"/>
</dbReference>
<dbReference type="Pfam" id="PF00164">
    <property type="entry name" value="Ribosom_S12_S23"/>
    <property type="match status" value="1"/>
</dbReference>
<dbReference type="PIRSF" id="PIRSF002133">
    <property type="entry name" value="Ribosomal_S12/S23"/>
    <property type="match status" value="1"/>
</dbReference>
<dbReference type="SUPFAM" id="SSF50249">
    <property type="entry name" value="Nucleic acid-binding proteins"/>
    <property type="match status" value="1"/>
</dbReference>
<dbReference type="PROSITE" id="PS00055">
    <property type="entry name" value="RIBOSOMAL_S12"/>
    <property type="match status" value="1"/>
</dbReference>
<proteinExistence type="inferred from homology"/>
<reference key="1">
    <citation type="journal article" date="2004" name="J. Bacteriol.">
        <title>Complete genome sequence of the genetically tractable hydrogenotrophic methanogen Methanococcus maripaludis.</title>
        <authorList>
            <person name="Hendrickson E.L."/>
            <person name="Kaul R."/>
            <person name="Zhou Y."/>
            <person name="Bovee D."/>
            <person name="Chapman P."/>
            <person name="Chung J."/>
            <person name="Conway de Macario E."/>
            <person name="Dodsworth J.A."/>
            <person name="Gillett W."/>
            <person name="Graham D.E."/>
            <person name="Hackett M."/>
            <person name="Haydock A.K."/>
            <person name="Kang A."/>
            <person name="Land M.L."/>
            <person name="Levy R."/>
            <person name="Lie T.J."/>
            <person name="Major T.A."/>
            <person name="Moore B.C."/>
            <person name="Porat I."/>
            <person name="Palmeiri A."/>
            <person name="Rouse G."/>
            <person name="Saenphimmachak C."/>
            <person name="Soell D."/>
            <person name="Van Dien S."/>
            <person name="Wang T."/>
            <person name="Whitman W.B."/>
            <person name="Xia Q."/>
            <person name="Zhang Y."/>
            <person name="Larimer F.W."/>
            <person name="Olson M.V."/>
            <person name="Leigh J.A."/>
        </authorList>
    </citation>
    <scope>NUCLEOTIDE SEQUENCE [LARGE SCALE GENOMIC DNA]</scope>
    <source>
        <strain>DSM 14266 / JCM 13030 / NBRC 101832 / S2 / LL</strain>
    </source>
</reference>
<protein>
    <recommendedName>
        <fullName evidence="1">Small ribosomal subunit protein uS12</fullName>
    </recommendedName>
    <alternativeName>
        <fullName evidence="2">30S ribosomal protein S12</fullName>
    </alternativeName>
</protein>
<organism>
    <name type="scientific">Methanococcus maripaludis (strain DSM 14266 / JCM 13030 / NBRC 101832 / S2 / LL)</name>
    <dbReference type="NCBI Taxonomy" id="267377"/>
    <lineage>
        <taxon>Archaea</taxon>
        <taxon>Methanobacteriati</taxon>
        <taxon>Methanobacteriota</taxon>
        <taxon>Methanomada group</taxon>
        <taxon>Methanococci</taxon>
        <taxon>Methanococcales</taxon>
        <taxon>Methanococcaceae</taxon>
        <taxon>Methanococcus</taxon>
    </lineage>
</organism>
<comment type="function">
    <text evidence="1">With S4 and S5 plays an important role in translational accuracy. Located at the interface of the 30S and 50S subunits.</text>
</comment>
<comment type="subunit">
    <text evidence="1">Part of the 30S ribosomal subunit.</text>
</comment>
<comment type="similarity">
    <text evidence="1">Belongs to the universal ribosomal protein uS12 family.</text>
</comment>
<gene>
    <name evidence="1" type="primary">rps12</name>
    <name type="ordered locus">MMP1367</name>
</gene>